<name>SAD2H_ARATH</name>
<organism>
    <name type="scientific">Arabidopsis thaliana</name>
    <name type="common">Mouse-ear cress</name>
    <dbReference type="NCBI Taxonomy" id="3702"/>
    <lineage>
        <taxon>Eukaryota</taxon>
        <taxon>Viridiplantae</taxon>
        <taxon>Streptophyta</taxon>
        <taxon>Embryophyta</taxon>
        <taxon>Tracheophyta</taxon>
        <taxon>Spermatophyta</taxon>
        <taxon>Magnoliopsida</taxon>
        <taxon>eudicotyledons</taxon>
        <taxon>Gunneridae</taxon>
        <taxon>Pentapetalae</taxon>
        <taxon>rosids</taxon>
        <taxon>malvids</taxon>
        <taxon>Brassicales</taxon>
        <taxon>Brassicaceae</taxon>
        <taxon>Camelineae</taxon>
        <taxon>Arabidopsis</taxon>
    </lineage>
</organism>
<accession>F4J738</accession>
<accession>B9DFH6</accession>
<accession>Q9LYT4</accession>
<proteinExistence type="evidence at protein level"/>
<reference key="1">
    <citation type="journal article" date="2000" name="Nature">
        <title>Sequence and analysis of chromosome 3 of the plant Arabidopsis thaliana.</title>
        <authorList>
            <person name="Salanoubat M."/>
            <person name="Lemcke K."/>
            <person name="Rieger M."/>
            <person name="Ansorge W."/>
            <person name="Unseld M."/>
            <person name="Fartmann B."/>
            <person name="Valle G."/>
            <person name="Bloecker H."/>
            <person name="Perez-Alonso M."/>
            <person name="Obermaier B."/>
            <person name="Delseny M."/>
            <person name="Boutry M."/>
            <person name="Grivell L.A."/>
            <person name="Mache R."/>
            <person name="Puigdomenech P."/>
            <person name="De Simone V."/>
            <person name="Choisne N."/>
            <person name="Artiguenave F."/>
            <person name="Robert C."/>
            <person name="Brottier P."/>
            <person name="Wincker P."/>
            <person name="Cattolico L."/>
            <person name="Weissenbach J."/>
            <person name="Saurin W."/>
            <person name="Quetier F."/>
            <person name="Schaefer M."/>
            <person name="Mueller-Auer S."/>
            <person name="Gabel C."/>
            <person name="Fuchs M."/>
            <person name="Benes V."/>
            <person name="Wurmbach E."/>
            <person name="Drzonek H."/>
            <person name="Erfle H."/>
            <person name="Jordan N."/>
            <person name="Bangert S."/>
            <person name="Wiedelmann R."/>
            <person name="Kranz H."/>
            <person name="Voss H."/>
            <person name="Holland R."/>
            <person name="Brandt P."/>
            <person name="Nyakatura G."/>
            <person name="Vezzi A."/>
            <person name="D'Angelo M."/>
            <person name="Pallavicini A."/>
            <person name="Toppo S."/>
            <person name="Simionati B."/>
            <person name="Conrad A."/>
            <person name="Hornischer K."/>
            <person name="Kauer G."/>
            <person name="Loehnert T.-H."/>
            <person name="Nordsiek G."/>
            <person name="Reichelt J."/>
            <person name="Scharfe M."/>
            <person name="Schoen O."/>
            <person name="Bargues M."/>
            <person name="Terol J."/>
            <person name="Climent J."/>
            <person name="Navarro P."/>
            <person name="Collado C."/>
            <person name="Perez-Perez A."/>
            <person name="Ottenwaelder B."/>
            <person name="Duchemin D."/>
            <person name="Cooke R."/>
            <person name="Laudie M."/>
            <person name="Berger-Llauro C."/>
            <person name="Purnelle B."/>
            <person name="Masuy D."/>
            <person name="de Haan M."/>
            <person name="Maarse A.C."/>
            <person name="Alcaraz J.-P."/>
            <person name="Cottet A."/>
            <person name="Casacuberta E."/>
            <person name="Monfort A."/>
            <person name="Argiriou A."/>
            <person name="Flores M."/>
            <person name="Liguori R."/>
            <person name="Vitale D."/>
            <person name="Mannhaupt G."/>
            <person name="Haase D."/>
            <person name="Schoof H."/>
            <person name="Rudd S."/>
            <person name="Zaccaria P."/>
            <person name="Mewes H.-W."/>
            <person name="Mayer K.F.X."/>
            <person name="Kaul S."/>
            <person name="Town C.D."/>
            <person name="Koo H.L."/>
            <person name="Tallon L.J."/>
            <person name="Jenkins J."/>
            <person name="Rooney T."/>
            <person name="Rizzo M."/>
            <person name="Walts A."/>
            <person name="Utterback T."/>
            <person name="Fujii C.Y."/>
            <person name="Shea T.P."/>
            <person name="Creasy T.H."/>
            <person name="Haas B."/>
            <person name="Maiti R."/>
            <person name="Wu D."/>
            <person name="Peterson J."/>
            <person name="Van Aken S."/>
            <person name="Pai G."/>
            <person name="Militscher J."/>
            <person name="Sellers P."/>
            <person name="Gill J.E."/>
            <person name="Feldblyum T.V."/>
            <person name="Preuss D."/>
            <person name="Lin X."/>
            <person name="Nierman W.C."/>
            <person name="Salzberg S.L."/>
            <person name="White O."/>
            <person name="Venter J.C."/>
            <person name="Fraser C.M."/>
            <person name="Kaneko T."/>
            <person name="Nakamura Y."/>
            <person name="Sato S."/>
            <person name="Kato T."/>
            <person name="Asamizu E."/>
            <person name="Sasamoto S."/>
            <person name="Kimura T."/>
            <person name="Idesawa K."/>
            <person name="Kawashima K."/>
            <person name="Kishida Y."/>
            <person name="Kiyokawa C."/>
            <person name="Kohara M."/>
            <person name="Matsumoto M."/>
            <person name="Matsuno A."/>
            <person name="Muraki A."/>
            <person name="Nakayama S."/>
            <person name="Nakazaki N."/>
            <person name="Shinpo S."/>
            <person name="Takeuchi C."/>
            <person name="Wada T."/>
            <person name="Watanabe A."/>
            <person name="Yamada M."/>
            <person name="Yasuda M."/>
            <person name="Tabata S."/>
        </authorList>
    </citation>
    <scope>NUCLEOTIDE SEQUENCE [LARGE SCALE GENOMIC DNA]</scope>
    <source>
        <strain>cv. Columbia</strain>
    </source>
</reference>
<reference key="2">
    <citation type="journal article" date="2017" name="Plant J.">
        <title>Araport11: a complete reannotation of the Arabidopsis thaliana reference genome.</title>
        <authorList>
            <person name="Cheng C.Y."/>
            <person name="Krishnakumar V."/>
            <person name="Chan A.P."/>
            <person name="Thibaud-Nissen F."/>
            <person name="Schobel S."/>
            <person name="Town C.D."/>
        </authorList>
    </citation>
    <scope>GENOME REANNOTATION</scope>
    <source>
        <strain>cv. Columbia</strain>
    </source>
</reference>
<reference key="3">
    <citation type="journal article" date="2009" name="DNA Res.">
        <title>Analysis of multiple occurrences of alternative splicing events in Arabidopsis thaliana using novel sequenced full-length cDNAs.</title>
        <authorList>
            <person name="Iida K."/>
            <person name="Fukami-Kobayashi K."/>
            <person name="Toyoda A."/>
            <person name="Sakaki Y."/>
            <person name="Kobayashi M."/>
            <person name="Seki M."/>
            <person name="Shinozaki K."/>
        </authorList>
    </citation>
    <scope>NUCLEOTIDE SEQUENCE [LARGE SCALE MRNA]</scope>
    <source>
        <strain>cv. Columbia</strain>
        <tissue evidence="7">Rosette leaf</tissue>
    </source>
</reference>
<reference key="4">
    <citation type="journal article" date="2006" name="Plant J.">
        <title>Mutation of SAD2, an importin beta-domain protein in Arabidopsis, alters abscisic acid sensitivity.</title>
        <authorList>
            <person name="Verslues P.E."/>
            <person name="Guo Y."/>
            <person name="Dong C.H."/>
            <person name="Ma W."/>
            <person name="Zhu J.K."/>
        </authorList>
    </citation>
    <scope>DISRUPTION PHENOTYPE</scope>
</reference>
<reference key="5">
    <citation type="journal article" date="2012" name="Mol. Cell. Proteomics">
        <title>Comparative large-scale characterisation of plant vs. mammal proteins reveals similar and idiosyncratic N-alpha acetylation features.</title>
        <authorList>
            <person name="Bienvenut W.V."/>
            <person name="Sumpton D."/>
            <person name="Martinez A."/>
            <person name="Lilla S."/>
            <person name="Espagne C."/>
            <person name="Meinnel T."/>
            <person name="Giglione C."/>
        </authorList>
    </citation>
    <scope>ACETYLATION [LARGE SCALE ANALYSIS] AT MET-1</scope>
    <scope>IDENTIFICATION BY MASS SPECTROMETRY [LARGE SCALE ANALYSIS]</scope>
</reference>
<comment type="function">
    <text evidence="1">Functions probably in nuclear protein import, either by acting as autonomous nuclear transport receptor or as an adapter-like protein in association with other importin subunits.</text>
</comment>
<comment type="subcellular location">
    <subcellularLocation>
        <location evidence="1">Cytoplasm</location>
    </subcellularLocation>
    <subcellularLocation>
        <location evidence="1">Nucleus</location>
    </subcellularLocation>
</comment>
<comment type="alternative products">
    <event type="alternative splicing"/>
    <isoform>
        <id>F4J738-1</id>
        <name>1</name>
        <sequence type="displayed"/>
    </isoform>
    <text evidence="5">A number of isoform are produced. According to EST sequences.</text>
</comment>
<comment type="disruption phenotype">
    <text evidence="4">No visible phenotype under normal growth conditions.</text>
</comment>
<comment type="similarity">
    <text evidence="5">Belongs to the importin beta family.</text>
</comment>
<comment type="sequence caution" evidence="5">
    <conflict type="erroneous gene model prediction">
        <sequence resource="EMBL-CDS" id="CAB86930"/>
    </conflict>
</comment>
<sequence length="1030" mass="117769">MDLPSLALIVGAAAFSPNPDERRAAEQSLNQLQHTPQHLIRILQIIVDGGSDLSVRQSASIHFKNFIAKHWEPHSGDQNIILPSDKNVVRNQILVFVSQVPPILRVQMGECLKTIIYADYPEQWPELLDWVKQNLQKPQVYGALFVLRILSSKYEFKSDEDRAPIHRVVEETFPHLLNIFNNLVHVENPSLEVADHIKLICKIFWSCIYLELPRPLFDPNFFNAWMGLFLNILERPVPVEGQPEDPELRKSWGWWKAKKWIAHILNRLYTRFGDLKLQNPDNKAFAQMFQINYAAKILECHLKLLNAIRIGGYLPDRVINLILQYLSNSISKSSMYNLLQPHLNTLLFEIVFPLMCFNDNDQMLWDEDPHEYVRKGYDIIEDLYSPRTASMDFVTELVRKRGKENFPKFIQFVVDIFKRYNEASLENKPYRLKDGALLAVGTLCDKLRQTEPYKSELENMLVQHVFPEFSSPAGHLRAKAAWVAGQYANIDFSDQSNFSKALHCVISGMCDLELPVRVDSVFALRSFIEACKDLDEIRPVLPQLLDEFFKLMKEVENEDLAFTLETIVYKFGEEISPYALGLCQNLASAFWRCIDTDNGDDETDDAGALAAVGCLRAISTILESISSLPHLYGQIEPQLLPIMRKMLTTDGQDVFEEVLEIVSYITTFSPTISLEMWSLWPLMMEALVDWAIDFFPNILVPLHNYISRGTGHYLTCKEPDYQQNLWNVISVLMANKNIDDSDLEPAPKLLGIVLQTCKGQVDQWVEPYLRITLDRLRGAEKSSFKCLLVEVVANAFYYNTPLALGILQRFGIATEIFTLWFQMLQEKKKSGARSNFKREHDKKVCILGLTSLFSLPAGQLPGEVLPHVFRALLELLVAYKDQLAEAAKAEEEEEDEDGDDDDMDEFQTDDEDEDGDDENPDETDGSTLRKLAAQAKDFRSYSDDDDFSDDDFSDDEELESPIDEVDPFVLFMDAVTAMQVSDSPRFQSLTQTLDPHYHGLASTIAQHTELRRAEILKEKLEKQSSATVAS</sequence>
<feature type="chain" id="PRO_0000431578" description="Importin beta-like SAD2 homolog">
    <location>
        <begin position="1"/>
        <end position="1030"/>
    </location>
</feature>
<feature type="domain" description="Importin N-terminal" evidence="2">
    <location>
        <begin position="25"/>
        <end position="99"/>
    </location>
</feature>
<feature type="region of interest" description="Disordered" evidence="3">
    <location>
        <begin position="886"/>
        <end position="928"/>
    </location>
</feature>
<feature type="region of interest" description="Disordered" evidence="3">
    <location>
        <begin position="940"/>
        <end position="964"/>
    </location>
</feature>
<feature type="compositionally biased region" description="Acidic residues" evidence="3">
    <location>
        <begin position="890"/>
        <end position="924"/>
    </location>
</feature>
<feature type="compositionally biased region" description="Acidic residues" evidence="3">
    <location>
        <begin position="943"/>
        <end position="964"/>
    </location>
</feature>
<feature type="modified residue" description="N-acetylmethionine" evidence="9">
    <location>
        <position position="1"/>
    </location>
</feature>
<feature type="sequence conflict" description="In Ref. 3; BAH19493." evidence="5" ref="3">
    <original>A</original>
    <variation>T</variation>
    <location>
        <position position="587"/>
    </location>
</feature>
<dbReference type="EMBL" id="AL163527">
    <property type="protein sequence ID" value="CAB86930.1"/>
    <property type="status" value="ALT_SEQ"/>
    <property type="molecule type" value="Genomic_DNA"/>
</dbReference>
<dbReference type="EMBL" id="CP002686">
    <property type="protein sequence ID" value="AEE79862.1"/>
    <property type="molecule type" value="Genomic_DNA"/>
</dbReference>
<dbReference type="EMBL" id="AK316774">
    <property type="protein sequence ID" value="BAH19493.1"/>
    <property type="molecule type" value="mRNA"/>
</dbReference>
<dbReference type="PIR" id="T47784">
    <property type="entry name" value="T47784"/>
</dbReference>
<dbReference type="RefSeq" id="NP_001030888.1">
    <molecule id="F4J738-1"/>
    <property type="nucleotide sequence ID" value="NM_001035811.2"/>
</dbReference>
<dbReference type="SMR" id="F4J738"/>
<dbReference type="FunCoup" id="F4J738">
    <property type="interactions" value="4372"/>
</dbReference>
<dbReference type="STRING" id="3702.F4J738"/>
<dbReference type="iPTMnet" id="F4J738"/>
<dbReference type="PaxDb" id="3702-AT3G59020.2"/>
<dbReference type="ProteomicsDB" id="232728">
    <molecule id="F4J738-1"/>
</dbReference>
<dbReference type="EnsemblPlants" id="AT3G59020.2">
    <molecule id="F4J738-1"/>
    <property type="protein sequence ID" value="AT3G59020.2"/>
    <property type="gene ID" value="AT3G59020"/>
</dbReference>
<dbReference type="GeneID" id="825071"/>
<dbReference type="Gramene" id="AT3G59020.2">
    <molecule id="F4J738-1"/>
    <property type="protein sequence ID" value="AT3G59020.2"/>
    <property type="gene ID" value="AT3G59020"/>
</dbReference>
<dbReference type="KEGG" id="ath:AT3G59020"/>
<dbReference type="Araport" id="AT3G59020"/>
<dbReference type="TAIR" id="AT3G59020"/>
<dbReference type="eggNOG" id="KOG1991">
    <property type="taxonomic scope" value="Eukaryota"/>
</dbReference>
<dbReference type="HOGENOM" id="CLU_004196_0_0_1"/>
<dbReference type="InParanoid" id="F4J738"/>
<dbReference type="OrthoDB" id="760868at2759"/>
<dbReference type="PhylomeDB" id="F4J738"/>
<dbReference type="PRO" id="PR:F4J738"/>
<dbReference type="Proteomes" id="UP000006548">
    <property type="component" value="Chromosome 3"/>
</dbReference>
<dbReference type="ExpressionAtlas" id="F4J738">
    <property type="expression patterns" value="baseline and differential"/>
</dbReference>
<dbReference type="GO" id="GO:0005737">
    <property type="term" value="C:cytoplasm"/>
    <property type="evidence" value="ECO:0007669"/>
    <property type="project" value="UniProtKB-SubCell"/>
</dbReference>
<dbReference type="GO" id="GO:0005634">
    <property type="term" value="C:nucleus"/>
    <property type="evidence" value="ECO:0007669"/>
    <property type="project" value="UniProtKB-SubCell"/>
</dbReference>
<dbReference type="GO" id="GO:0031267">
    <property type="term" value="F:small GTPase binding"/>
    <property type="evidence" value="ECO:0007669"/>
    <property type="project" value="InterPro"/>
</dbReference>
<dbReference type="GO" id="GO:0006886">
    <property type="term" value="P:intracellular protein transport"/>
    <property type="evidence" value="ECO:0007669"/>
    <property type="project" value="InterPro"/>
</dbReference>
<dbReference type="FunFam" id="1.25.10.10:FF:000177">
    <property type="entry name" value="Importin beta-like SAD2"/>
    <property type="match status" value="1"/>
</dbReference>
<dbReference type="Gene3D" id="1.25.10.10">
    <property type="entry name" value="Leucine-rich Repeat Variant"/>
    <property type="match status" value="1"/>
</dbReference>
<dbReference type="InterPro" id="IPR011989">
    <property type="entry name" value="ARM-like"/>
</dbReference>
<dbReference type="InterPro" id="IPR016024">
    <property type="entry name" value="ARM-type_fold"/>
</dbReference>
<dbReference type="InterPro" id="IPR001494">
    <property type="entry name" value="Importin-beta_N"/>
</dbReference>
<dbReference type="InterPro" id="IPR013713">
    <property type="entry name" value="XPO2_central"/>
</dbReference>
<dbReference type="PANTHER" id="PTHR10997:SF53">
    <property type="entry name" value="IMPORTIN BETA-LIKE SAD2 HOMOLOG"/>
    <property type="match status" value="1"/>
</dbReference>
<dbReference type="PANTHER" id="PTHR10997">
    <property type="entry name" value="IMPORTIN-7, 8, 11"/>
    <property type="match status" value="1"/>
</dbReference>
<dbReference type="Pfam" id="PF08506">
    <property type="entry name" value="Cse1"/>
    <property type="match status" value="1"/>
</dbReference>
<dbReference type="Pfam" id="PF03810">
    <property type="entry name" value="IBN_N"/>
    <property type="match status" value="1"/>
</dbReference>
<dbReference type="SMART" id="SM00913">
    <property type="entry name" value="IBN_N"/>
    <property type="match status" value="1"/>
</dbReference>
<dbReference type="SUPFAM" id="SSF48371">
    <property type="entry name" value="ARM repeat"/>
    <property type="match status" value="1"/>
</dbReference>
<dbReference type="PROSITE" id="PS50166">
    <property type="entry name" value="IMPORTIN_B_NT"/>
    <property type="match status" value="1"/>
</dbReference>
<gene>
    <name evidence="6" type="ordered locus">At3g59020</name>
    <name evidence="8" type="ORF">F17J16.70</name>
</gene>
<evidence type="ECO:0000250" key="1">
    <source>
        <dbReference type="UniProtKB" id="F4IRR2"/>
    </source>
</evidence>
<evidence type="ECO:0000255" key="2">
    <source>
        <dbReference type="PROSITE-ProRule" id="PRU00115"/>
    </source>
</evidence>
<evidence type="ECO:0000256" key="3">
    <source>
        <dbReference type="SAM" id="MobiDB-lite"/>
    </source>
</evidence>
<evidence type="ECO:0000269" key="4">
    <source>
    </source>
</evidence>
<evidence type="ECO:0000305" key="5"/>
<evidence type="ECO:0000312" key="6">
    <source>
        <dbReference type="Araport" id="AT3G59020"/>
    </source>
</evidence>
<evidence type="ECO:0000312" key="7">
    <source>
        <dbReference type="EMBL" id="BAH19493.1"/>
    </source>
</evidence>
<evidence type="ECO:0000312" key="8">
    <source>
        <dbReference type="EMBL" id="CAB86930.1"/>
    </source>
</evidence>
<evidence type="ECO:0007744" key="9">
    <source>
    </source>
</evidence>
<keyword id="KW-0007">Acetylation</keyword>
<keyword id="KW-0025">Alternative splicing</keyword>
<keyword id="KW-0963">Cytoplasm</keyword>
<keyword id="KW-0539">Nucleus</keyword>
<keyword id="KW-0653">Protein transport</keyword>
<keyword id="KW-1185">Reference proteome</keyword>
<keyword id="KW-0813">Transport</keyword>
<protein>
    <recommendedName>
        <fullName evidence="5">Importin beta-like SAD2 homolog</fullName>
    </recommendedName>
</protein>